<sequence>MVLIKRHFLQKAAIKVMVDEYLAKQFYNAEYAGVEIVKTPIGTRVIIYAGRPPLIIGKGGKTIKQLAQVLEKFFGLENPQITVTAAENPELNARVMAFRLAIALEKGYHFRRAAFITIRRIMSSGAVGAEVIVSGKLTSERAKYEKLKEGTVYKSGQQLEKIIDRAIGIAMLKPGVYGVEVVITKPTRSIDKIELKEKVEKTEQGGMVTVTNVSFIEENKSSGGVSNASGS</sequence>
<protein>
    <recommendedName>
        <fullName evidence="1">Small ribosomal subunit protein uS3</fullName>
    </recommendedName>
    <alternativeName>
        <fullName evidence="2">30S ribosomal protein S3</fullName>
    </alternativeName>
</protein>
<gene>
    <name evidence="1" type="primary">rps3</name>
    <name type="ordered locus">Saci_0591</name>
</gene>
<keyword id="KW-0002">3D-structure</keyword>
<keyword id="KW-1185">Reference proteome</keyword>
<keyword id="KW-0687">Ribonucleoprotein</keyword>
<keyword id="KW-0689">Ribosomal protein</keyword>
<keyword id="KW-0694">RNA-binding</keyword>
<keyword id="KW-0699">rRNA-binding</keyword>
<proteinExistence type="evidence at protein level"/>
<dbReference type="EMBL" id="CP000077">
    <property type="protein sequence ID" value="AAY79983.1"/>
    <property type="molecule type" value="Genomic_DNA"/>
</dbReference>
<dbReference type="RefSeq" id="WP_011277485.1">
    <property type="nucleotide sequence ID" value="NC_007181.1"/>
</dbReference>
<dbReference type="PDB" id="8HKX">
    <property type="method" value="EM"/>
    <property type="resolution" value="3.14 A"/>
    <property type="chains" value="AS3P=2-202"/>
</dbReference>
<dbReference type="PDB" id="8HKY">
    <property type="method" value="EM"/>
    <property type="resolution" value="4.45 A"/>
    <property type="chains" value="AS3P=2-202"/>
</dbReference>
<dbReference type="PDB" id="8HKZ">
    <property type="method" value="EM"/>
    <property type="resolution" value="4.78 A"/>
    <property type="chains" value="AS3P=2-202"/>
</dbReference>
<dbReference type="PDB" id="8HL1">
    <property type="method" value="EM"/>
    <property type="resolution" value="3.93 A"/>
    <property type="chains" value="AS3P=2-202"/>
</dbReference>
<dbReference type="PDB" id="8HL2">
    <property type="method" value="EM"/>
    <property type="resolution" value="4.10 A"/>
    <property type="chains" value="AS3P=2-202"/>
</dbReference>
<dbReference type="PDB" id="8HL3">
    <property type="method" value="EM"/>
    <property type="resolution" value="4.80 A"/>
    <property type="chains" value="AS3P=2-202"/>
</dbReference>
<dbReference type="PDB" id="8HL4">
    <property type="method" value="EM"/>
    <property type="resolution" value="4.62 A"/>
    <property type="chains" value="AS3P=2-202"/>
</dbReference>
<dbReference type="PDB" id="8HL5">
    <property type="method" value="EM"/>
    <property type="resolution" value="5.72 A"/>
    <property type="chains" value="AS3P=2-202"/>
</dbReference>
<dbReference type="PDB" id="8WKP">
    <property type="method" value="EM"/>
    <property type="resolution" value="4.62 A"/>
    <property type="chains" value="AS3P=2-202"/>
</dbReference>
<dbReference type="PDB" id="8WQ2">
    <property type="method" value="EM"/>
    <property type="resolution" value="4.10 A"/>
    <property type="chains" value="AS3P=2-202"/>
</dbReference>
<dbReference type="PDB" id="8WQ4">
    <property type="method" value="EM"/>
    <property type="resolution" value="4.53 A"/>
    <property type="chains" value="AS3P=2-202"/>
</dbReference>
<dbReference type="PDBsum" id="8HKX"/>
<dbReference type="PDBsum" id="8HKY"/>
<dbReference type="PDBsum" id="8HKZ"/>
<dbReference type="PDBsum" id="8HL1"/>
<dbReference type="PDBsum" id="8HL2"/>
<dbReference type="PDBsum" id="8HL3"/>
<dbReference type="PDBsum" id="8HL4"/>
<dbReference type="PDBsum" id="8HL5"/>
<dbReference type="PDBsum" id="8WKP"/>
<dbReference type="PDBsum" id="8WQ2"/>
<dbReference type="PDBsum" id="8WQ4"/>
<dbReference type="EMDB" id="EMD-34862"/>
<dbReference type="EMDB" id="EMD-34863"/>
<dbReference type="EMDB" id="EMD-34864"/>
<dbReference type="EMDB" id="EMD-34866"/>
<dbReference type="EMDB" id="EMD-34867"/>
<dbReference type="EMDB" id="EMD-34868"/>
<dbReference type="EMDB" id="EMD-34869"/>
<dbReference type="EMDB" id="EMD-34870"/>
<dbReference type="EMDB" id="EMD-37604"/>
<dbReference type="EMDB" id="EMD-37733"/>
<dbReference type="EMDB" id="EMD-37734"/>
<dbReference type="SMR" id="Q4JB46"/>
<dbReference type="STRING" id="330779.Saci_0591"/>
<dbReference type="GeneID" id="14551112"/>
<dbReference type="KEGG" id="sai:Saci_0591"/>
<dbReference type="PATRIC" id="fig|330779.12.peg.570"/>
<dbReference type="eggNOG" id="arCOG04097">
    <property type="taxonomic scope" value="Archaea"/>
</dbReference>
<dbReference type="HOGENOM" id="CLU_058591_1_1_2"/>
<dbReference type="Proteomes" id="UP000001018">
    <property type="component" value="Chromosome"/>
</dbReference>
<dbReference type="GO" id="GO:0022627">
    <property type="term" value="C:cytosolic small ribosomal subunit"/>
    <property type="evidence" value="ECO:0007669"/>
    <property type="project" value="TreeGrafter"/>
</dbReference>
<dbReference type="GO" id="GO:0019843">
    <property type="term" value="F:rRNA binding"/>
    <property type="evidence" value="ECO:0007669"/>
    <property type="project" value="UniProtKB-UniRule"/>
</dbReference>
<dbReference type="GO" id="GO:0003735">
    <property type="term" value="F:structural constituent of ribosome"/>
    <property type="evidence" value="ECO:0007669"/>
    <property type="project" value="InterPro"/>
</dbReference>
<dbReference type="GO" id="GO:0006412">
    <property type="term" value="P:translation"/>
    <property type="evidence" value="ECO:0007669"/>
    <property type="project" value="UniProtKB-UniRule"/>
</dbReference>
<dbReference type="CDD" id="cd02411">
    <property type="entry name" value="KH-II_30S_S3_arch"/>
    <property type="match status" value="1"/>
</dbReference>
<dbReference type="FunFam" id="3.30.300.20:FF:000001">
    <property type="entry name" value="30S ribosomal protein S3"/>
    <property type="match status" value="1"/>
</dbReference>
<dbReference type="Gene3D" id="3.30.300.20">
    <property type="match status" value="1"/>
</dbReference>
<dbReference type="Gene3D" id="3.30.1140.32">
    <property type="entry name" value="Ribosomal protein S3, C-terminal domain"/>
    <property type="match status" value="1"/>
</dbReference>
<dbReference type="HAMAP" id="MF_01309_A">
    <property type="entry name" value="Ribosomal_uS3_A"/>
    <property type="match status" value="1"/>
</dbReference>
<dbReference type="InterPro" id="IPR004087">
    <property type="entry name" value="KH_dom"/>
</dbReference>
<dbReference type="InterPro" id="IPR015946">
    <property type="entry name" value="KH_dom-like_a/b"/>
</dbReference>
<dbReference type="InterPro" id="IPR004044">
    <property type="entry name" value="KH_dom_type_2"/>
</dbReference>
<dbReference type="InterPro" id="IPR009019">
    <property type="entry name" value="KH_sf_prok-type"/>
</dbReference>
<dbReference type="InterPro" id="IPR036419">
    <property type="entry name" value="Ribosomal_S3_C_sf"/>
</dbReference>
<dbReference type="InterPro" id="IPR027488">
    <property type="entry name" value="Ribosomal_uS3_arc"/>
</dbReference>
<dbReference type="InterPro" id="IPR001351">
    <property type="entry name" value="Ribosomal_uS3_C"/>
</dbReference>
<dbReference type="InterPro" id="IPR018280">
    <property type="entry name" value="Ribosomal_uS3_CS"/>
</dbReference>
<dbReference type="InterPro" id="IPR005703">
    <property type="entry name" value="Ribosomal_uS3_euk/arc"/>
</dbReference>
<dbReference type="NCBIfam" id="NF003219">
    <property type="entry name" value="PRK04191.1"/>
    <property type="match status" value="1"/>
</dbReference>
<dbReference type="NCBIfam" id="TIGR01008">
    <property type="entry name" value="uS3_euk_arch"/>
    <property type="match status" value="1"/>
</dbReference>
<dbReference type="PANTHER" id="PTHR11760">
    <property type="entry name" value="30S/40S RIBOSOMAL PROTEIN S3"/>
    <property type="match status" value="1"/>
</dbReference>
<dbReference type="PANTHER" id="PTHR11760:SF32">
    <property type="entry name" value="SMALL RIBOSOMAL SUBUNIT PROTEIN US3"/>
    <property type="match status" value="1"/>
</dbReference>
<dbReference type="Pfam" id="PF07650">
    <property type="entry name" value="KH_2"/>
    <property type="match status" value="1"/>
</dbReference>
<dbReference type="Pfam" id="PF00189">
    <property type="entry name" value="Ribosomal_S3_C"/>
    <property type="match status" value="1"/>
</dbReference>
<dbReference type="SMART" id="SM00322">
    <property type="entry name" value="KH"/>
    <property type="match status" value="1"/>
</dbReference>
<dbReference type="SUPFAM" id="SSF54814">
    <property type="entry name" value="Prokaryotic type KH domain (KH-domain type II)"/>
    <property type="match status" value="1"/>
</dbReference>
<dbReference type="SUPFAM" id="SSF54821">
    <property type="entry name" value="Ribosomal protein S3 C-terminal domain"/>
    <property type="match status" value="1"/>
</dbReference>
<dbReference type="PROSITE" id="PS50823">
    <property type="entry name" value="KH_TYPE_2"/>
    <property type="match status" value="1"/>
</dbReference>
<dbReference type="PROSITE" id="PS00548">
    <property type="entry name" value="RIBOSOMAL_S3"/>
    <property type="match status" value="1"/>
</dbReference>
<feature type="chain" id="PRO_0000130261" description="Small ribosomal subunit protein uS3">
    <location>
        <begin position="1"/>
        <end position="231"/>
    </location>
</feature>
<feature type="domain" description="KH type-2" evidence="1">
    <location>
        <begin position="18"/>
        <end position="97"/>
    </location>
</feature>
<reference key="1">
    <citation type="journal article" date="2005" name="J. Bacteriol.">
        <title>The genome of Sulfolobus acidocaldarius, a model organism of the Crenarchaeota.</title>
        <authorList>
            <person name="Chen L."/>
            <person name="Bruegger K."/>
            <person name="Skovgaard M."/>
            <person name="Redder P."/>
            <person name="She Q."/>
            <person name="Torarinsson E."/>
            <person name="Greve B."/>
            <person name="Awayez M."/>
            <person name="Zibat A."/>
            <person name="Klenk H.-P."/>
            <person name="Garrett R.A."/>
        </authorList>
    </citation>
    <scope>NUCLEOTIDE SEQUENCE [LARGE SCALE GENOMIC DNA]</scope>
    <source>
        <strain>ATCC 33909 / DSM 639 / JCM 8929 / NBRC 15157 / NCIMB 11770</strain>
    </source>
</reference>
<organism>
    <name type="scientific">Sulfolobus acidocaldarius (strain ATCC 33909 / DSM 639 / JCM 8929 / NBRC 15157 / NCIMB 11770)</name>
    <dbReference type="NCBI Taxonomy" id="330779"/>
    <lineage>
        <taxon>Archaea</taxon>
        <taxon>Thermoproteota</taxon>
        <taxon>Thermoprotei</taxon>
        <taxon>Sulfolobales</taxon>
        <taxon>Sulfolobaceae</taxon>
        <taxon>Sulfolobus</taxon>
    </lineage>
</organism>
<evidence type="ECO:0000255" key="1">
    <source>
        <dbReference type="HAMAP-Rule" id="MF_01309"/>
    </source>
</evidence>
<evidence type="ECO:0000305" key="2"/>
<name>RS3_SULAC</name>
<comment type="function">
    <text evidence="1">Binds the lower part of the 30S subunit head.</text>
</comment>
<comment type="subunit">
    <text evidence="1">Part of the 30S ribosomal subunit.</text>
</comment>
<comment type="similarity">
    <text evidence="1">Belongs to the universal ribosomal protein uS3 family.</text>
</comment>
<accession>Q4JB46</accession>